<feature type="chain" id="PRO_0000340190" description="Sulfate adenylyltransferase subunit 2">
    <location>
        <begin position="1"/>
        <end position="311"/>
    </location>
</feature>
<proteinExistence type="inferred from homology"/>
<reference key="1">
    <citation type="journal article" date="2001" name="Proc. Natl. Acad. Sci. U.S.A.">
        <title>Complete genome sequence of Caulobacter crescentus.</title>
        <authorList>
            <person name="Nierman W.C."/>
            <person name="Feldblyum T.V."/>
            <person name="Laub M.T."/>
            <person name="Paulsen I.T."/>
            <person name="Nelson K.E."/>
            <person name="Eisen J.A."/>
            <person name="Heidelberg J.F."/>
            <person name="Alley M.R.K."/>
            <person name="Ohta N."/>
            <person name="Maddock J.R."/>
            <person name="Potocka I."/>
            <person name="Nelson W.C."/>
            <person name="Newton A."/>
            <person name="Stephens C."/>
            <person name="Phadke N.D."/>
            <person name="Ely B."/>
            <person name="DeBoy R.T."/>
            <person name="Dodson R.J."/>
            <person name="Durkin A.S."/>
            <person name="Gwinn M.L."/>
            <person name="Haft D.H."/>
            <person name="Kolonay J.F."/>
            <person name="Smit J."/>
            <person name="Craven M.B."/>
            <person name="Khouri H.M."/>
            <person name="Shetty J."/>
            <person name="Berry K.J."/>
            <person name="Utterback T.R."/>
            <person name="Tran K."/>
            <person name="Wolf A.M."/>
            <person name="Vamathevan J.J."/>
            <person name="Ermolaeva M.D."/>
            <person name="White O."/>
            <person name="Salzberg S.L."/>
            <person name="Venter J.C."/>
            <person name="Shapiro L."/>
            <person name="Fraser C.M."/>
        </authorList>
    </citation>
    <scope>NUCLEOTIDE SEQUENCE [LARGE SCALE GENOMIC DNA]</scope>
    <source>
        <strain>ATCC 19089 / CIP 103742 / CB 15</strain>
    </source>
</reference>
<name>CYSD_CAUVC</name>
<evidence type="ECO:0000255" key="1">
    <source>
        <dbReference type="HAMAP-Rule" id="MF_00064"/>
    </source>
</evidence>
<accession>Q9A881</accession>
<dbReference type="EC" id="2.7.7.4" evidence="1"/>
<dbReference type="EMBL" id="AE005673">
    <property type="protein sequence ID" value="AAK23462.1"/>
    <property type="molecule type" value="Genomic_DNA"/>
</dbReference>
<dbReference type="PIR" id="B87433">
    <property type="entry name" value="B87433"/>
</dbReference>
<dbReference type="RefSeq" id="NP_420294.1">
    <property type="nucleotide sequence ID" value="NC_002696.2"/>
</dbReference>
<dbReference type="SMR" id="Q9A881"/>
<dbReference type="STRING" id="190650.CC_1483"/>
<dbReference type="EnsemblBacteria" id="AAK23462">
    <property type="protein sequence ID" value="AAK23462"/>
    <property type="gene ID" value="CC_1483"/>
</dbReference>
<dbReference type="KEGG" id="ccr:CC_1483"/>
<dbReference type="PATRIC" id="fig|190650.5.peg.1510"/>
<dbReference type="eggNOG" id="COG0175">
    <property type="taxonomic scope" value="Bacteria"/>
</dbReference>
<dbReference type="HOGENOM" id="CLU_043026_0_0_5"/>
<dbReference type="BioCyc" id="CAULO:CC1483-MONOMER"/>
<dbReference type="UniPathway" id="UPA00140">
    <property type="reaction ID" value="UER00204"/>
</dbReference>
<dbReference type="Proteomes" id="UP000001816">
    <property type="component" value="Chromosome"/>
</dbReference>
<dbReference type="GO" id="GO:0005524">
    <property type="term" value="F:ATP binding"/>
    <property type="evidence" value="ECO:0007669"/>
    <property type="project" value="UniProtKB-KW"/>
</dbReference>
<dbReference type="GO" id="GO:0004781">
    <property type="term" value="F:sulfate adenylyltransferase (ATP) activity"/>
    <property type="evidence" value="ECO:0007669"/>
    <property type="project" value="UniProtKB-UniRule"/>
</dbReference>
<dbReference type="GO" id="GO:0070814">
    <property type="term" value="P:hydrogen sulfide biosynthetic process"/>
    <property type="evidence" value="ECO:0007669"/>
    <property type="project" value="UniProtKB-UniRule"/>
</dbReference>
<dbReference type="GO" id="GO:0000103">
    <property type="term" value="P:sulfate assimilation"/>
    <property type="evidence" value="ECO:0007669"/>
    <property type="project" value="UniProtKB-UniRule"/>
</dbReference>
<dbReference type="CDD" id="cd23946">
    <property type="entry name" value="Sulfate_adenylyltransferase_2"/>
    <property type="match status" value="1"/>
</dbReference>
<dbReference type="FunFam" id="3.40.50.620:FF:000002">
    <property type="entry name" value="Sulfate adenylyltransferase subunit 2"/>
    <property type="match status" value="1"/>
</dbReference>
<dbReference type="Gene3D" id="3.40.50.620">
    <property type="entry name" value="HUPs"/>
    <property type="match status" value="1"/>
</dbReference>
<dbReference type="HAMAP" id="MF_00064">
    <property type="entry name" value="Sulf_adenylyltr_sub2"/>
    <property type="match status" value="1"/>
</dbReference>
<dbReference type="InterPro" id="IPR002500">
    <property type="entry name" value="PAPS_reduct_dom"/>
</dbReference>
<dbReference type="InterPro" id="IPR014729">
    <property type="entry name" value="Rossmann-like_a/b/a_fold"/>
</dbReference>
<dbReference type="InterPro" id="IPR011784">
    <property type="entry name" value="SO4_adenylTrfase_ssu"/>
</dbReference>
<dbReference type="InterPro" id="IPR050128">
    <property type="entry name" value="Sulfate_adenylyltrnsfr_sub2"/>
</dbReference>
<dbReference type="NCBIfam" id="TIGR02039">
    <property type="entry name" value="CysD"/>
    <property type="match status" value="1"/>
</dbReference>
<dbReference type="NCBIfam" id="NF003587">
    <property type="entry name" value="PRK05253.1"/>
    <property type="match status" value="1"/>
</dbReference>
<dbReference type="NCBIfam" id="NF009214">
    <property type="entry name" value="PRK12563.1"/>
    <property type="match status" value="1"/>
</dbReference>
<dbReference type="PANTHER" id="PTHR43196">
    <property type="entry name" value="SULFATE ADENYLYLTRANSFERASE SUBUNIT 2"/>
    <property type="match status" value="1"/>
</dbReference>
<dbReference type="PANTHER" id="PTHR43196:SF1">
    <property type="entry name" value="SULFATE ADENYLYLTRANSFERASE SUBUNIT 2"/>
    <property type="match status" value="1"/>
</dbReference>
<dbReference type="Pfam" id="PF01507">
    <property type="entry name" value="PAPS_reduct"/>
    <property type="match status" value="1"/>
</dbReference>
<dbReference type="PIRSF" id="PIRSF002936">
    <property type="entry name" value="CysDAde_trans"/>
    <property type="match status" value="1"/>
</dbReference>
<dbReference type="SUPFAM" id="SSF52402">
    <property type="entry name" value="Adenine nucleotide alpha hydrolases-like"/>
    <property type="match status" value="1"/>
</dbReference>
<keyword id="KW-0067">ATP-binding</keyword>
<keyword id="KW-0547">Nucleotide-binding</keyword>
<keyword id="KW-0548">Nucleotidyltransferase</keyword>
<keyword id="KW-1185">Reference proteome</keyword>
<keyword id="KW-0808">Transferase</keyword>
<protein>
    <recommendedName>
        <fullName evidence="1">Sulfate adenylyltransferase subunit 2</fullName>
        <ecNumber evidence="1">2.7.7.4</ecNumber>
    </recommendedName>
    <alternativeName>
        <fullName evidence="1">ATP-sulfurylase small subunit</fullName>
    </alternativeName>
    <alternativeName>
        <fullName evidence="1">Sulfate adenylate transferase</fullName>
        <shortName evidence="1">SAT</shortName>
    </alternativeName>
</protein>
<comment type="function">
    <text evidence="1">With CysN forms the ATP sulfurylase (ATPS) that catalyzes the adenylation of sulfate producing adenosine 5'-phosphosulfate (APS) and diphosphate, the first enzymatic step in sulfur assimilation pathway. APS synthesis involves the formation of a high-energy phosphoric-sulfuric acid anhydride bond driven by GTP hydrolysis by CysN coupled to ATP hydrolysis by CysD.</text>
</comment>
<comment type="catalytic activity">
    <reaction evidence="1">
        <text>sulfate + ATP + H(+) = adenosine 5'-phosphosulfate + diphosphate</text>
        <dbReference type="Rhea" id="RHEA:18133"/>
        <dbReference type="ChEBI" id="CHEBI:15378"/>
        <dbReference type="ChEBI" id="CHEBI:16189"/>
        <dbReference type="ChEBI" id="CHEBI:30616"/>
        <dbReference type="ChEBI" id="CHEBI:33019"/>
        <dbReference type="ChEBI" id="CHEBI:58243"/>
        <dbReference type="EC" id="2.7.7.4"/>
    </reaction>
</comment>
<comment type="pathway">
    <text evidence="1">Sulfur metabolism; hydrogen sulfide biosynthesis; sulfite from sulfate: step 1/3.</text>
</comment>
<comment type="subunit">
    <text evidence="1">Heterodimer composed of CysD, the smaller subunit, and CysN.</text>
</comment>
<comment type="similarity">
    <text evidence="1">Belongs to the PAPS reductase family. CysD subfamily.</text>
</comment>
<organism>
    <name type="scientific">Caulobacter vibrioides (strain ATCC 19089 / CIP 103742 / CB 15)</name>
    <name type="common">Caulobacter crescentus</name>
    <dbReference type="NCBI Taxonomy" id="190650"/>
    <lineage>
        <taxon>Bacteria</taxon>
        <taxon>Pseudomonadati</taxon>
        <taxon>Pseudomonadota</taxon>
        <taxon>Alphaproteobacteria</taxon>
        <taxon>Caulobacterales</taxon>
        <taxon>Caulobacteraceae</taxon>
        <taxon>Caulobacter</taxon>
    </lineage>
</organism>
<sequence>MTPDLTQSAITPARLTHLQRLEAESIHILREVAAECERPVMLYSIGKDSAVMLHLAAKAFYPSKPPFPLLHIDTTWKFRDMYALRDRIGSEMGFDLLVHKNPDAQARGINPFDHGSAVHTDLWKTEGLKQALSKYGFDAAFGGARRDEEKSRAKERVFSFRSSEHRWDPKNQRPELWNLYNTRKHPGESLRVFPISNWTELDIWQYIHLENIPIVPLYFAAERPVVERDGALIMVDDDRFRLRDGEVPQMRSVRFRTLGCYPLTGAVESTAATLPQVIQEMLLATTSERQGRVIDHDQSASMEKKKQEGYF</sequence>
<gene>
    <name evidence="1" type="primary">cysD</name>
    <name type="ordered locus">CC_1483</name>
</gene>